<feature type="chain" id="PRO_1000143083" description="Small ribosomal subunit protein uS15">
    <location>
        <begin position="1"/>
        <end position="89"/>
    </location>
</feature>
<name>RS15_BRUA1</name>
<proteinExistence type="inferred from homology"/>
<sequence>MSITAERKQALIKEYATKEGDTGSPEVQVAVLSERIANLTEHFKGHKNDNHSRRGLLKLVSQRRRLLDYVKGVDHARYQALITRLGLRR</sequence>
<comment type="function">
    <text evidence="1">One of the primary rRNA binding proteins, it binds directly to 16S rRNA where it helps nucleate assembly of the platform of the 30S subunit by binding and bridging several RNA helices of the 16S rRNA.</text>
</comment>
<comment type="function">
    <text evidence="1">Forms an intersubunit bridge (bridge B4) with the 23S rRNA of the 50S subunit in the ribosome.</text>
</comment>
<comment type="subunit">
    <text evidence="1">Part of the 30S ribosomal subunit. Forms a bridge to the 50S subunit in the 70S ribosome, contacting the 23S rRNA.</text>
</comment>
<comment type="similarity">
    <text evidence="1">Belongs to the universal ribosomal protein uS15 family.</text>
</comment>
<gene>
    <name evidence="1" type="primary">rpsO</name>
    <name type="ordered locus">BAbS19_I20290</name>
</gene>
<keyword id="KW-0687">Ribonucleoprotein</keyword>
<keyword id="KW-0689">Ribosomal protein</keyword>
<keyword id="KW-0694">RNA-binding</keyword>
<keyword id="KW-0699">rRNA-binding</keyword>
<accession>B2S9F9</accession>
<reference key="1">
    <citation type="journal article" date="2008" name="PLoS ONE">
        <title>Genome sequence of Brucella abortus vaccine strain S19 compared to virulent strains yields candidate virulence genes.</title>
        <authorList>
            <person name="Crasta O.R."/>
            <person name="Folkerts O."/>
            <person name="Fei Z."/>
            <person name="Mane S.P."/>
            <person name="Evans C."/>
            <person name="Martino-Catt S."/>
            <person name="Bricker B."/>
            <person name="Yu G."/>
            <person name="Du L."/>
            <person name="Sobral B.W."/>
        </authorList>
    </citation>
    <scope>NUCLEOTIDE SEQUENCE [LARGE SCALE GENOMIC DNA]</scope>
    <source>
        <strain>S19</strain>
    </source>
</reference>
<dbReference type="EMBL" id="CP000887">
    <property type="protein sequence ID" value="ACD73511.1"/>
    <property type="molecule type" value="Genomic_DNA"/>
</dbReference>
<dbReference type="RefSeq" id="WP_002965230.1">
    <property type="nucleotide sequence ID" value="NC_010742.1"/>
</dbReference>
<dbReference type="SMR" id="B2S9F9"/>
<dbReference type="GeneID" id="97534579"/>
<dbReference type="KEGG" id="bmc:BAbS19_I20290"/>
<dbReference type="HOGENOM" id="CLU_148518_0_0_5"/>
<dbReference type="Proteomes" id="UP000002565">
    <property type="component" value="Chromosome 1"/>
</dbReference>
<dbReference type="GO" id="GO:0022627">
    <property type="term" value="C:cytosolic small ribosomal subunit"/>
    <property type="evidence" value="ECO:0007669"/>
    <property type="project" value="TreeGrafter"/>
</dbReference>
<dbReference type="GO" id="GO:0019843">
    <property type="term" value="F:rRNA binding"/>
    <property type="evidence" value="ECO:0007669"/>
    <property type="project" value="UniProtKB-UniRule"/>
</dbReference>
<dbReference type="GO" id="GO:0003735">
    <property type="term" value="F:structural constituent of ribosome"/>
    <property type="evidence" value="ECO:0007669"/>
    <property type="project" value="InterPro"/>
</dbReference>
<dbReference type="GO" id="GO:0006412">
    <property type="term" value="P:translation"/>
    <property type="evidence" value="ECO:0007669"/>
    <property type="project" value="UniProtKB-UniRule"/>
</dbReference>
<dbReference type="CDD" id="cd00353">
    <property type="entry name" value="Ribosomal_S15p_S13e"/>
    <property type="match status" value="1"/>
</dbReference>
<dbReference type="FunFam" id="1.10.287.10:FF:000002">
    <property type="entry name" value="30S ribosomal protein S15"/>
    <property type="match status" value="1"/>
</dbReference>
<dbReference type="Gene3D" id="6.10.250.3130">
    <property type="match status" value="1"/>
</dbReference>
<dbReference type="Gene3D" id="1.10.287.10">
    <property type="entry name" value="S15/NS1, RNA-binding"/>
    <property type="match status" value="1"/>
</dbReference>
<dbReference type="HAMAP" id="MF_01343_B">
    <property type="entry name" value="Ribosomal_uS15_B"/>
    <property type="match status" value="1"/>
</dbReference>
<dbReference type="InterPro" id="IPR000589">
    <property type="entry name" value="Ribosomal_uS15"/>
</dbReference>
<dbReference type="InterPro" id="IPR005290">
    <property type="entry name" value="Ribosomal_uS15_bac-type"/>
</dbReference>
<dbReference type="InterPro" id="IPR009068">
    <property type="entry name" value="uS15_NS1_RNA-bd_sf"/>
</dbReference>
<dbReference type="NCBIfam" id="TIGR00952">
    <property type="entry name" value="S15_bact"/>
    <property type="match status" value="1"/>
</dbReference>
<dbReference type="PANTHER" id="PTHR23321">
    <property type="entry name" value="RIBOSOMAL PROTEIN S15, BACTERIAL AND ORGANELLAR"/>
    <property type="match status" value="1"/>
</dbReference>
<dbReference type="PANTHER" id="PTHR23321:SF26">
    <property type="entry name" value="SMALL RIBOSOMAL SUBUNIT PROTEIN US15M"/>
    <property type="match status" value="1"/>
</dbReference>
<dbReference type="Pfam" id="PF00312">
    <property type="entry name" value="Ribosomal_S15"/>
    <property type="match status" value="1"/>
</dbReference>
<dbReference type="SMART" id="SM01387">
    <property type="entry name" value="Ribosomal_S15"/>
    <property type="match status" value="1"/>
</dbReference>
<dbReference type="SUPFAM" id="SSF47060">
    <property type="entry name" value="S15/NS1 RNA-binding domain"/>
    <property type="match status" value="1"/>
</dbReference>
<dbReference type="PROSITE" id="PS00362">
    <property type="entry name" value="RIBOSOMAL_S15"/>
    <property type="match status" value="1"/>
</dbReference>
<evidence type="ECO:0000255" key="1">
    <source>
        <dbReference type="HAMAP-Rule" id="MF_01343"/>
    </source>
</evidence>
<evidence type="ECO:0000305" key="2"/>
<organism>
    <name type="scientific">Brucella abortus (strain S19)</name>
    <dbReference type="NCBI Taxonomy" id="430066"/>
    <lineage>
        <taxon>Bacteria</taxon>
        <taxon>Pseudomonadati</taxon>
        <taxon>Pseudomonadota</taxon>
        <taxon>Alphaproteobacteria</taxon>
        <taxon>Hyphomicrobiales</taxon>
        <taxon>Brucellaceae</taxon>
        <taxon>Brucella/Ochrobactrum group</taxon>
        <taxon>Brucella</taxon>
    </lineage>
</organism>
<protein>
    <recommendedName>
        <fullName evidence="1">Small ribosomal subunit protein uS15</fullName>
    </recommendedName>
    <alternativeName>
        <fullName evidence="2">30S ribosomal protein S15</fullName>
    </alternativeName>
</protein>